<keyword id="KW-0028">Amino-acid biosynthesis</keyword>
<keyword id="KW-0963">Cytoplasm</keyword>
<keyword id="KW-0368">Histidine biosynthesis</keyword>
<keyword id="KW-0456">Lyase</keyword>
<keyword id="KW-1185">Reference proteome</keyword>
<dbReference type="EC" id="4.2.1.19" evidence="1"/>
<dbReference type="EMBL" id="CP000031">
    <property type="protein sequence ID" value="AAV94462.1"/>
    <property type="molecule type" value="Genomic_DNA"/>
</dbReference>
<dbReference type="RefSeq" id="WP_011046909.1">
    <property type="nucleotide sequence ID" value="NC_003911.12"/>
</dbReference>
<dbReference type="SMR" id="Q5LU92"/>
<dbReference type="STRING" id="246200.SPO1163"/>
<dbReference type="PaxDb" id="246200-SPO1163"/>
<dbReference type="KEGG" id="sil:SPO1163"/>
<dbReference type="eggNOG" id="COG0131">
    <property type="taxonomic scope" value="Bacteria"/>
</dbReference>
<dbReference type="HOGENOM" id="CLU_044308_2_0_5"/>
<dbReference type="OrthoDB" id="9813612at2"/>
<dbReference type="UniPathway" id="UPA00031">
    <property type="reaction ID" value="UER00011"/>
</dbReference>
<dbReference type="Proteomes" id="UP000001023">
    <property type="component" value="Chromosome"/>
</dbReference>
<dbReference type="GO" id="GO:0005737">
    <property type="term" value="C:cytoplasm"/>
    <property type="evidence" value="ECO:0007669"/>
    <property type="project" value="UniProtKB-SubCell"/>
</dbReference>
<dbReference type="GO" id="GO:0004424">
    <property type="term" value="F:imidazoleglycerol-phosphate dehydratase activity"/>
    <property type="evidence" value="ECO:0007669"/>
    <property type="project" value="UniProtKB-UniRule"/>
</dbReference>
<dbReference type="GO" id="GO:0000105">
    <property type="term" value="P:L-histidine biosynthetic process"/>
    <property type="evidence" value="ECO:0007669"/>
    <property type="project" value="UniProtKB-UniRule"/>
</dbReference>
<dbReference type="CDD" id="cd07914">
    <property type="entry name" value="IGPD"/>
    <property type="match status" value="1"/>
</dbReference>
<dbReference type="FunFam" id="3.30.230.40:FF:000001">
    <property type="entry name" value="Imidazoleglycerol-phosphate dehydratase HisB"/>
    <property type="match status" value="1"/>
</dbReference>
<dbReference type="FunFam" id="3.30.230.40:FF:000003">
    <property type="entry name" value="Imidazoleglycerol-phosphate dehydratase HisB"/>
    <property type="match status" value="1"/>
</dbReference>
<dbReference type="Gene3D" id="3.30.230.40">
    <property type="entry name" value="Imidazole glycerol phosphate dehydratase, domain 1"/>
    <property type="match status" value="2"/>
</dbReference>
<dbReference type="HAMAP" id="MF_00076">
    <property type="entry name" value="HisB"/>
    <property type="match status" value="1"/>
</dbReference>
<dbReference type="InterPro" id="IPR038494">
    <property type="entry name" value="IGPD_sf"/>
</dbReference>
<dbReference type="InterPro" id="IPR000807">
    <property type="entry name" value="ImidazoleglycerolP_deHydtase"/>
</dbReference>
<dbReference type="InterPro" id="IPR020565">
    <property type="entry name" value="ImidazoleglycerP_deHydtase_CS"/>
</dbReference>
<dbReference type="InterPro" id="IPR020568">
    <property type="entry name" value="Ribosomal_Su5_D2-typ_SF"/>
</dbReference>
<dbReference type="NCBIfam" id="NF002109">
    <property type="entry name" value="PRK00951.1-5"/>
    <property type="match status" value="1"/>
</dbReference>
<dbReference type="NCBIfam" id="NF002111">
    <property type="entry name" value="PRK00951.2-1"/>
    <property type="match status" value="1"/>
</dbReference>
<dbReference type="NCBIfam" id="NF002114">
    <property type="entry name" value="PRK00951.2-4"/>
    <property type="match status" value="1"/>
</dbReference>
<dbReference type="PANTHER" id="PTHR23133:SF2">
    <property type="entry name" value="IMIDAZOLEGLYCEROL-PHOSPHATE DEHYDRATASE"/>
    <property type="match status" value="1"/>
</dbReference>
<dbReference type="PANTHER" id="PTHR23133">
    <property type="entry name" value="IMIDAZOLEGLYCEROL-PHOSPHATE DEHYDRATASE HIS7"/>
    <property type="match status" value="1"/>
</dbReference>
<dbReference type="Pfam" id="PF00475">
    <property type="entry name" value="IGPD"/>
    <property type="match status" value="1"/>
</dbReference>
<dbReference type="SUPFAM" id="SSF54211">
    <property type="entry name" value="Ribosomal protein S5 domain 2-like"/>
    <property type="match status" value="2"/>
</dbReference>
<dbReference type="PROSITE" id="PS00954">
    <property type="entry name" value="IGP_DEHYDRATASE_1"/>
    <property type="match status" value="1"/>
</dbReference>
<dbReference type="PROSITE" id="PS00955">
    <property type="entry name" value="IGP_DEHYDRATASE_2"/>
    <property type="match status" value="1"/>
</dbReference>
<comment type="catalytic activity">
    <reaction evidence="1">
        <text>D-erythro-1-(imidazol-4-yl)glycerol 3-phosphate = 3-(imidazol-4-yl)-2-oxopropyl phosphate + H2O</text>
        <dbReference type="Rhea" id="RHEA:11040"/>
        <dbReference type="ChEBI" id="CHEBI:15377"/>
        <dbReference type="ChEBI" id="CHEBI:57766"/>
        <dbReference type="ChEBI" id="CHEBI:58278"/>
        <dbReference type="EC" id="4.2.1.19"/>
    </reaction>
</comment>
<comment type="pathway">
    <text evidence="1">Amino-acid biosynthesis; L-histidine biosynthesis; L-histidine from 5-phospho-alpha-D-ribose 1-diphosphate: step 6/9.</text>
</comment>
<comment type="subcellular location">
    <subcellularLocation>
        <location evidence="1">Cytoplasm</location>
    </subcellularLocation>
</comment>
<comment type="similarity">
    <text evidence="1">Belongs to the imidazoleglycerol-phosphate dehydratase family.</text>
</comment>
<evidence type="ECO:0000255" key="1">
    <source>
        <dbReference type="HAMAP-Rule" id="MF_00076"/>
    </source>
</evidence>
<sequence>MRRASISRQTAETEISVDINLDGTGAYDNQTGVGFFDHMLDQLARHSLIDMTISAKGDYHIDDHHTVEDTGIALGQALSAALGDKRGIRRYGECHLPMDDAQVRCALDLSGRPFLVWNVDLPTAKIGTFDTELVREFFQAFSTHGGITLHVDQLHGLNSHHIAEAAFKAVARALRQAVESDPRKGDAIPSTKGTL</sequence>
<reference key="1">
    <citation type="journal article" date="2004" name="Nature">
        <title>Genome sequence of Silicibacter pomeroyi reveals adaptations to the marine environment.</title>
        <authorList>
            <person name="Moran M.A."/>
            <person name="Buchan A."/>
            <person name="Gonzalez J.M."/>
            <person name="Heidelberg J.F."/>
            <person name="Whitman W.B."/>
            <person name="Kiene R.P."/>
            <person name="Henriksen J.R."/>
            <person name="King G.M."/>
            <person name="Belas R."/>
            <person name="Fuqua C."/>
            <person name="Brinkac L.M."/>
            <person name="Lewis M."/>
            <person name="Johri S."/>
            <person name="Weaver B."/>
            <person name="Pai G."/>
            <person name="Eisen J.A."/>
            <person name="Rahe E."/>
            <person name="Sheldon W.M."/>
            <person name="Ye W."/>
            <person name="Miller T.R."/>
            <person name="Carlton J."/>
            <person name="Rasko D.A."/>
            <person name="Paulsen I.T."/>
            <person name="Ren Q."/>
            <person name="Daugherty S.C."/>
            <person name="DeBoy R.T."/>
            <person name="Dodson R.J."/>
            <person name="Durkin A.S."/>
            <person name="Madupu R."/>
            <person name="Nelson W.C."/>
            <person name="Sullivan S.A."/>
            <person name="Rosovitz M.J."/>
            <person name="Haft D.H."/>
            <person name="Selengut J."/>
            <person name="Ward N."/>
        </authorList>
    </citation>
    <scope>NUCLEOTIDE SEQUENCE [LARGE SCALE GENOMIC DNA]</scope>
    <source>
        <strain>ATCC 700808 / DSM 15171 / DSS-3</strain>
    </source>
</reference>
<reference key="2">
    <citation type="journal article" date="2014" name="Stand. Genomic Sci.">
        <title>An updated genome annotation for the model marine bacterium Ruegeria pomeroyi DSS-3.</title>
        <authorList>
            <person name="Rivers A.R."/>
            <person name="Smith C.B."/>
            <person name="Moran M.A."/>
        </authorList>
    </citation>
    <scope>GENOME REANNOTATION</scope>
    <source>
        <strain>ATCC 700808 / DSM 15171 / DSS-3</strain>
    </source>
</reference>
<feature type="chain" id="PRO_1000010350" description="Imidazoleglycerol-phosphate dehydratase">
    <location>
        <begin position="1"/>
        <end position="195"/>
    </location>
</feature>
<accession>Q5LU92</accession>
<protein>
    <recommendedName>
        <fullName evidence="1">Imidazoleglycerol-phosphate dehydratase</fullName>
        <shortName evidence="1">IGPD</shortName>
        <ecNumber evidence="1">4.2.1.19</ecNumber>
    </recommendedName>
</protein>
<proteinExistence type="inferred from homology"/>
<organism>
    <name type="scientific">Ruegeria pomeroyi (strain ATCC 700808 / DSM 15171 / DSS-3)</name>
    <name type="common">Silicibacter pomeroyi</name>
    <dbReference type="NCBI Taxonomy" id="246200"/>
    <lineage>
        <taxon>Bacteria</taxon>
        <taxon>Pseudomonadati</taxon>
        <taxon>Pseudomonadota</taxon>
        <taxon>Alphaproteobacteria</taxon>
        <taxon>Rhodobacterales</taxon>
        <taxon>Roseobacteraceae</taxon>
        <taxon>Ruegeria</taxon>
    </lineage>
</organism>
<gene>
    <name evidence="1" type="primary">hisB</name>
    <name type="ordered locus">SPO1163</name>
</gene>
<name>HIS7_RUEPO</name>